<reference key="1">
    <citation type="journal article" date="2008" name="Proc. Natl. Acad. Sci. U.S.A.">
        <title>The genome of Cyanothece 51142, a unicellular diazotrophic cyanobacterium important in the marine nitrogen cycle.</title>
        <authorList>
            <person name="Welsh E.A."/>
            <person name="Liberton M."/>
            <person name="Stoeckel J."/>
            <person name="Loh T."/>
            <person name="Elvitigala T."/>
            <person name="Wang C."/>
            <person name="Wollam A."/>
            <person name="Fulton R.S."/>
            <person name="Clifton S.W."/>
            <person name="Jacobs J.M."/>
            <person name="Aurora R."/>
            <person name="Ghosh B.K."/>
            <person name="Sherman L.A."/>
            <person name="Smith R.D."/>
            <person name="Wilson R.K."/>
            <person name="Pakrasi H.B."/>
        </authorList>
    </citation>
    <scope>NUCLEOTIDE SEQUENCE [LARGE SCALE GENOMIC DNA]</scope>
    <source>
        <strain>ATCC 51142 / BH68</strain>
    </source>
</reference>
<comment type="function">
    <text evidence="1">Catalyzes the hydrolytic deamination of adenine to hypoxanthine. Plays an important role in the purine salvage pathway and in nitrogen catabolism.</text>
</comment>
<comment type="catalytic activity">
    <reaction evidence="1">
        <text>adenine + H2O + H(+) = hypoxanthine + NH4(+)</text>
        <dbReference type="Rhea" id="RHEA:23688"/>
        <dbReference type="ChEBI" id="CHEBI:15377"/>
        <dbReference type="ChEBI" id="CHEBI:15378"/>
        <dbReference type="ChEBI" id="CHEBI:16708"/>
        <dbReference type="ChEBI" id="CHEBI:17368"/>
        <dbReference type="ChEBI" id="CHEBI:28938"/>
        <dbReference type="EC" id="3.5.4.2"/>
    </reaction>
</comment>
<comment type="cofactor">
    <cofactor evidence="1">
        <name>Zn(2+)</name>
        <dbReference type="ChEBI" id="CHEBI:29105"/>
    </cofactor>
    <text evidence="1">Binds 1 zinc ion per subunit.</text>
</comment>
<comment type="similarity">
    <text evidence="1">Belongs to the metallo-dependent hydrolases superfamily. Adenosine and AMP deaminases family. Adenine deaminase type 2 subfamily.</text>
</comment>
<feature type="chain" id="PRO_1000146569" description="Adenine deaminase">
    <location>
        <begin position="1"/>
        <end position="326"/>
    </location>
</feature>
<feature type="active site" description="Proton donor" evidence="1">
    <location>
        <position position="197"/>
    </location>
</feature>
<feature type="binding site" evidence="1">
    <location>
        <position position="14"/>
    </location>
    <ligand>
        <name>Zn(2+)</name>
        <dbReference type="ChEBI" id="CHEBI:29105"/>
        <note>catalytic</note>
    </ligand>
</feature>
<feature type="binding site" evidence="1">
    <location>
        <position position="16"/>
    </location>
    <ligand>
        <name>Zn(2+)</name>
        <dbReference type="ChEBI" id="CHEBI:29105"/>
        <note>catalytic</note>
    </ligand>
</feature>
<feature type="binding site" evidence="1">
    <location>
        <position position="194"/>
    </location>
    <ligand>
        <name>Zn(2+)</name>
        <dbReference type="ChEBI" id="CHEBI:29105"/>
        <note>catalytic</note>
    </ligand>
</feature>
<feature type="binding site" evidence="1">
    <location>
        <position position="275"/>
    </location>
    <ligand>
        <name>Zn(2+)</name>
        <dbReference type="ChEBI" id="CHEBI:29105"/>
        <note>catalytic</note>
    </ligand>
</feature>
<feature type="binding site" evidence="1">
    <location>
        <position position="276"/>
    </location>
    <ligand>
        <name>substrate</name>
    </ligand>
</feature>
<feature type="site" description="Important for catalytic activity" evidence="1">
    <location>
        <position position="218"/>
    </location>
</feature>
<sequence>MKTLIEQLPKAELHIHIEGSLEPELMFKLAQRNHQRLSFSSVEEAKQAYQFNDLQSFLNIYYQGANVLYGEEDFYDLTWNYLEKAKKQNICHTEIFFDPQTHTNRGVPFAAIITGITEALKAGKDQLGISSYLILCFLRDLTVESAFETLEQAIKYGEKIKAIGLDSAEKNNPPSKFKEVFDKARAEGFLTVAHAGEEGSSDYIWQAINLLKVSRIDHGIRCIDDPKLVEYLAEKQIPLTVCPLSNVKLKVFNCLEDHNLKILLDQGLCVTINSDDPAYFGGYLNENFLAISQALRLTEIDLQKMINNSFRASFLNTSEKEQLYIQ</sequence>
<evidence type="ECO:0000255" key="1">
    <source>
        <dbReference type="HAMAP-Rule" id="MF_01962"/>
    </source>
</evidence>
<organism>
    <name type="scientific">Crocosphaera subtropica (strain ATCC 51142 / BH68)</name>
    <name type="common">Cyanothece sp. (strain ATCC 51142)</name>
    <dbReference type="NCBI Taxonomy" id="43989"/>
    <lineage>
        <taxon>Bacteria</taxon>
        <taxon>Bacillati</taxon>
        <taxon>Cyanobacteriota</taxon>
        <taxon>Cyanophyceae</taxon>
        <taxon>Oscillatoriophycideae</taxon>
        <taxon>Chroococcales</taxon>
        <taxon>Aphanothecaceae</taxon>
        <taxon>Crocosphaera</taxon>
        <taxon>Crocosphaera subtropica</taxon>
    </lineage>
</organism>
<protein>
    <recommendedName>
        <fullName evidence="1">Adenine deaminase</fullName>
        <shortName evidence="1">ADE</shortName>
        <ecNumber evidence="1">3.5.4.2</ecNumber>
    </recommendedName>
    <alternativeName>
        <fullName evidence="1">Adenine aminohydrolase</fullName>
        <shortName evidence="1">AAH</shortName>
    </alternativeName>
</protein>
<gene>
    <name type="ordered locus">cce_0747</name>
</gene>
<proteinExistence type="inferred from homology"/>
<keyword id="KW-0378">Hydrolase</keyword>
<keyword id="KW-0479">Metal-binding</keyword>
<keyword id="KW-0546">Nucleotide metabolism</keyword>
<keyword id="KW-1185">Reference proteome</keyword>
<keyword id="KW-0862">Zinc</keyword>
<name>ADE_CROS5</name>
<dbReference type="EC" id="3.5.4.2" evidence="1"/>
<dbReference type="EMBL" id="CP000806">
    <property type="protein sequence ID" value="ACB50098.1"/>
    <property type="molecule type" value="Genomic_DNA"/>
</dbReference>
<dbReference type="RefSeq" id="WP_009545987.1">
    <property type="nucleotide sequence ID" value="NC_010546.1"/>
</dbReference>
<dbReference type="SMR" id="B1WR40"/>
<dbReference type="STRING" id="43989.cce_0747"/>
<dbReference type="KEGG" id="cyt:cce_0747"/>
<dbReference type="eggNOG" id="COG1816">
    <property type="taxonomic scope" value="Bacteria"/>
</dbReference>
<dbReference type="HOGENOM" id="CLU_039228_7_0_3"/>
<dbReference type="OrthoDB" id="9779574at2"/>
<dbReference type="Proteomes" id="UP000001203">
    <property type="component" value="Chromosome circular"/>
</dbReference>
<dbReference type="GO" id="GO:0005829">
    <property type="term" value="C:cytosol"/>
    <property type="evidence" value="ECO:0007669"/>
    <property type="project" value="TreeGrafter"/>
</dbReference>
<dbReference type="GO" id="GO:0000034">
    <property type="term" value="F:adenine deaminase activity"/>
    <property type="evidence" value="ECO:0007669"/>
    <property type="project" value="UniProtKB-UniRule"/>
</dbReference>
<dbReference type="GO" id="GO:0008270">
    <property type="term" value="F:zinc ion binding"/>
    <property type="evidence" value="ECO:0007669"/>
    <property type="project" value="UniProtKB-UniRule"/>
</dbReference>
<dbReference type="GO" id="GO:0006146">
    <property type="term" value="P:adenine catabolic process"/>
    <property type="evidence" value="ECO:0007669"/>
    <property type="project" value="UniProtKB-UniRule"/>
</dbReference>
<dbReference type="GO" id="GO:0043103">
    <property type="term" value="P:hypoxanthine salvage"/>
    <property type="evidence" value="ECO:0007669"/>
    <property type="project" value="UniProtKB-UniRule"/>
</dbReference>
<dbReference type="GO" id="GO:0009117">
    <property type="term" value="P:nucleotide metabolic process"/>
    <property type="evidence" value="ECO:0007669"/>
    <property type="project" value="UniProtKB-KW"/>
</dbReference>
<dbReference type="CDD" id="cd01320">
    <property type="entry name" value="ADA"/>
    <property type="match status" value="1"/>
</dbReference>
<dbReference type="FunFam" id="3.20.20.140:FF:000039">
    <property type="entry name" value="Adenine deaminase"/>
    <property type="match status" value="1"/>
</dbReference>
<dbReference type="Gene3D" id="3.20.20.140">
    <property type="entry name" value="Metal-dependent hydrolases"/>
    <property type="match status" value="1"/>
</dbReference>
<dbReference type="HAMAP" id="MF_01962">
    <property type="entry name" value="Adenine_deaminase"/>
    <property type="match status" value="1"/>
</dbReference>
<dbReference type="InterPro" id="IPR001365">
    <property type="entry name" value="A_deaminase_dom"/>
</dbReference>
<dbReference type="InterPro" id="IPR028892">
    <property type="entry name" value="ADE"/>
</dbReference>
<dbReference type="InterPro" id="IPR006330">
    <property type="entry name" value="Ado/ade_deaminase"/>
</dbReference>
<dbReference type="InterPro" id="IPR032466">
    <property type="entry name" value="Metal_Hydrolase"/>
</dbReference>
<dbReference type="NCBIfam" id="TIGR01430">
    <property type="entry name" value="aden_deam"/>
    <property type="match status" value="1"/>
</dbReference>
<dbReference type="NCBIfam" id="NF006850">
    <property type="entry name" value="PRK09358.1-6"/>
    <property type="match status" value="1"/>
</dbReference>
<dbReference type="PANTHER" id="PTHR43114">
    <property type="entry name" value="ADENINE DEAMINASE"/>
    <property type="match status" value="1"/>
</dbReference>
<dbReference type="PANTHER" id="PTHR43114:SF6">
    <property type="entry name" value="ADENINE DEAMINASE"/>
    <property type="match status" value="1"/>
</dbReference>
<dbReference type="Pfam" id="PF00962">
    <property type="entry name" value="A_deaminase"/>
    <property type="match status" value="1"/>
</dbReference>
<dbReference type="SUPFAM" id="SSF51556">
    <property type="entry name" value="Metallo-dependent hydrolases"/>
    <property type="match status" value="1"/>
</dbReference>
<accession>B1WR40</accession>